<accession>B4UD71</accession>
<dbReference type="EC" id="2.7.7.6" evidence="1"/>
<dbReference type="EMBL" id="CP001131">
    <property type="protein sequence ID" value="ACG74869.1"/>
    <property type="molecule type" value="Genomic_DNA"/>
</dbReference>
<dbReference type="RefSeq" id="WP_011422638.1">
    <property type="nucleotide sequence ID" value="NC_011145.1"/>
</dbReference>
<dbReference type="SMR" id="B4UD71"/>
<dbReference type="KEGG" id="ank:AnaeK_3657"/>
<dbReference type="HOGENOM" id="CLU_125406_5_1_7"/>
<dbReference type="OrthoDB" id="9796300at2"/>
<dbReference type="Proteomes" id="UP000001871">
    <property type="component" value="Chromosome"/>
</dbReference>
<dbReference type="GO" id="GO:0000428">
    <property type="term" value="C:DNA-directed RNA polymerase complex"/>
    <property type="evidence" value="ECO:0007669"/>
    <property type="project" value="UniProtKB-KW"/>
</dbReference>
<dbReference type="GO" id="GO:0003677">
    <property type="term" value="F:DNA binding"/>
    <property type="evidence" value="ECO:0007669"/>
    <property type="project" value="UniProtKB-UniRule"/>
</dbReference>
<dbReference type="GO" id="GO:0003899">
    <property type="term" value="F:DNA-directed RNA polymerase activity"/>
    <property type="evidence" value="ECO:0007669"/>
    <property type="project" value="UniProtKB-UniRule"/>
</dbReference>
<dbReference type="GO" id="GO:0006351">
    <property type="term" value="P:DNA-templated transcription"/>
    <property type="evidence" value="ECO:0007669"/>
    <property type="project" value="UniProtKB-UniRule"/>
</dbReference>
<dbReference type="Gene3D" id="3.90.940.10">
    <property type="match status" value="1"/>
</dbReference>
<dbReference type="HAMAP" id="MF_00366">
    <property type="entry name" value="RNApol_bact_RpoZ"/>
    <property type="match status" value="1"/>
</dbReference>
<dbReference type="InterPro" id="IPR003716">
    <property type="entry name" value="DNA-dir_RNA_pol_omega"/>
</dbReference>
<dbReference type="InterPro" id="IPR006110">
    <property type="entry name" value="Pol_omega/Rpo6/RPB6"/>
</dbReference>
<dbReference type="InterPro" id="IPR036161">
    <property type="entry name" value="RPB6/omega-like_sf"/>
</dbReference>
<dbReference type="NCBIfam" id="TIGR00690">
    <property type="entry name" value="rpoZ"/>
    <property type="match status" value="1"/>
</dbReference>
<dbReference type="PANTHER" id="PTHR34476">
    <property type="entry name" value="DNA-DIRECTED RNA POLYMERASE SUBUNIT OMEGA"/>
    <property type="match status" value="1"/>
</dbReference>
<dbReference type="PANTHER" id="PTHR34476:SF1">
    <property type="entry name" value="DNA-DIRECTED RNA POLYMERASE SUBUNIT OMEGA"/>
    <property type="match status" value="1"/>
</dbReference>
<dbReference type="Pfam" id="PF01192">
    <property type="entry name" value="RNA_pol_Rpb6"/>
    <property type="match status" value="1"/>
</dbReference>
<dbReference type="SMART" id="SM01409">
    <property type="entry name" value="RNA_pol_Rpb6"/>
    <property type="match status" value="1"/>
</dbReference>
<dbReference type="SUPFAM" id="SSF63562">
    <property type="entry name" value="RPB6/omega subunit-like"/>
    <property type="match status" value="1"/>
</dbReference>
<proteinExistence type="inferred from homology"/>
<gene>
    <name evidence="1" type="primary">rpoZ</name>
    <name type="ordered locus">AnaeK_3657</name>
</gene>
<protein>
    <recommendedName>
        <fullName evidence="1">DNA-directed RNA polymerase subunit omega</fullName>
        <shortName evidence="1">RNAP omega subunit</shortName>
        <ecNumber evidence="1">2.7.7.6</ecNumber>
    </recommendedName>
    <alternativeName>
        <fullName evidence="1">RNA polymerase omega subunit</fullName>
    </alternativeName>
    <alternativeName>
        <fullName evidence="1">Transcriptase subunit omega</fullName>
    </alternativeName>
</protein>
<evidence type="ECO:0000255" key="1">
    <source>
        <dbReference type="HAMAP-Rule" id="MF_00366"/>
    </source>
</evidence>
<name>RPOZ_ANASK</name>
<feature type="chain" id="PRO_1000121185" description="DNA-directed RNA polymerase subunit omega">
    <location>
        <begin position="1"/>
        <end position="88"/>
    </location>
</feature>
<keyword id="KW-0240">DNA-directed RNA polymerase</keyword>
<keyword id="KW-0548">Nucleotidyltransferase</keyword>
<keyword id="KW-0804">Transcription</keyword>
<keyword id="KW-0808">Transferase</keyword>
<reference key="1">
    <citation type="submission" date="2008-08" db="EMBL/GenBank/DDBJ databases">
        <title>Complete sequence of Anaeromyxobacter sp. K.</title>
        <authorList>
            <consortium name="US DOE Joint Genome Institute"/>
            <person name="Lucas S."/>
            <person name="Copeland A."/>
            <person name="Lapidus A."/>
            <person name="Glavina del Rio T."/>
            <person name="Dalin E."/>
            <person name="Tice H."/>
            <person name="Bruce D."/>
            <person name="Goodwin L."/>
            <person name="Pitluck S."/>
            <person name="Saunders E."/>
            <person name="Brettin T."/>
            <person name="Detter J.C."/>
            <person name="Han C."/>
            <person name="Larimer F."/>
            <person name="Land M."/>
            <person name="Hauser L."/>
            <person name="Kyrpides N."/>
            <person name="Ovchinnikiva G."/>
            <person name="Beliaev A."/>
        </authorList>
    </citation>
    <scope>NUCLEOTIDE SEQUENCE [LARGE SCALE GENOMIC DNA]</scope>
    <source>
        <strain>K</strain>
    </source>
</reference>
<comment type="function">
    <text evidence="1">Promotes RNA polymerase assembly. Latches the N- and C-terminal regions of the beta' subunit thereby facilitating its interaction with the beta and alpha subunits.</text>
</comment>
<comment type="catalytic activity">
    <reaction evidence="1">
        <text>RNA(n) + a ribonucleoside 5'-triphosphate = RNA(n+1) + diphosphate</text>
        <dbReference type="Rhea" id="RHEA:21248"/>
        <dbReference type="Rhea" id="RHEA-COMP:14527"/>
        <dbReference type="Rhea" id="RHEA-COMP:17342"/>
        <dbReference type="ChEBI" id="CHEBI:33019"/>
        <dbReference type="ChEBI" id="CHEBI:61557"/>
        <dbReference type="ChEBI" id="CHEBI:140395"/>
        <dbReference type="EC" id="2.7.7.6"/>
    </reaction>
</comment>
<comment type="subunit">
    <text evidence="1">The RNAP catalytic core consists of 2 alpha, 1 beta, 1 beta' and 1 omega subunit. When a sigma factor is associated with the core the holoenzyme is formed, which can initiate transcription.</text>
</comment>
<comment type="similarity">
    <text evidence="1">Belongs to the RNA polymerase subunit omega family.</text>
</comment>
<organism>
    <name type="scientific">Anaeromyxobacter sp. (strain K)</name>
    <dbReference type="NCBI Taxonomy" id="447217"/>
    <lineage>
        <taxon>Bacteria</taxon>
        <taxon>Pseudomonadati</taxon>
        <taxon>Myxococcota</taxon>
        <taxon>Myxococcia</taxon>
        <taxon>Myxococcales</taxon>
        <taxon>Cystobacterineae</taxon>
        <taxon>Anaeromyxobacteraceae</taxon>
        <taxon>Anaeromyxobacter</taxon>
    </lineage>
</organism>
<sequence length="88" mass="9776">MARVTVEDCLPMVDNRFALVLLATKRTRQLMAGARPLQAASKNKPPVLALREIATGKVRFDRSVRDALSGKFDKEKVNIPAGQTRTLR</sequence>